<protein>
    <recommendedName>
        <fullName>Virion membrane protein OPG144 precursor</fullName>
    </recommendedName>
    <alternativeName>
        <fullName>23 kDa late protein</fullName>
    </alternativeName>
    <component>
        <recommendedName>
            <fullName>Mature 21 kDa protein OPG144</fullName>
        </recommendedName>
    </component>
</protein>
<name>PG144_VACCW</name>
<organismHost>
    <name type="scientific">Bos taurus</name>
    <name type="common">Bovine</name>
    <dbReference type="NCBI Taxonomy" id="9913"/>
</organismHost>
<sequence>MSYLRYYNMLDDFSAGAGVLDKDLFTEEQQQSFMPKDGGMMQNDYGGMNDYLGIFKNNDVRTLLGLILFVLALYSPPLISILMIFISSFLLPLTSLVITYCLVTQMYRGGNGNTVGMSIVCIVAAVIIMAINVFTNSQIFNIISYIILFILFFAYVMNIERQDYRRSINVTIPEQYTCNKPYTAGNKVDVDIPTFNSLNTDDY</sequence>
<feature type="chain" id="PRO_0000099258" description="Virion membrane protein OPG144 precursor">
    <location>
        <begin position="1"/>
        <end position="203"/>
    </location>
</feature>
<feature type="propeptide" id="PRO_0000413883">
    <location>
        <begin position="1"/>
        <end position="16"/>
    </location>
</feature>
<feature type="chain" id="PRO_0000413884" description="Mature 21 kDa protein OPG144">
    <location>
        <begin position="17"/>
        <end position="185"/>
    </location>
</feature>
<feature type="propeptide" id="PRO_0000413885">
    <location>
        <begin position="185"/>
        <end position="203"/>
    </location>
</feature>
<feature type="topological domain" description="Virion surface" evidence="13">
    <location>
        <begin position="1"/>
        <end position="65"/>
    </location>
</feature>
<feature type="transmembrane region" description="Helical" evidence="1">
    <location>
        <begin position="66"/>
        <end position="86"/>
    </location>
</feature>
<feature type="topological domain" description="Intravirion" evidence="13">
    <location>
        <begin position="87"/>
        <end position="138"/>
    </location>
</feature>
<feature type="transmembrane region" description="Helical" evidence="1">
    <location>
        <begin position="139"/>
        <end position="159"/>
    </location>
</feature>
<feature type="topological domain" description="Virion surface" evidence="13">
    <location>
        <begin position="160"/>
        <end position="203"/>
    </location>
</feature>
<feature type="region of interest" description="Binding to OPG125 scaffold protein">
    <location>
        <begin position="1"/>
        <end position="38"/>
    </location>
</feature>
<feature type="site" description="Cleavage; by OPG083 protease" evidence="14">
    <location>
        <begin position="16"/>
        <end position="17"/>
    </location>
</feature>
<feature type="site" description="Cleavage; by OPG083 protease" evidence="2 14">
    <location>
        <begin position="185"/>
        <end position="186"/>
    </location>
</feature>
<feature type="modified residue" description="Phosphotyrosine" evidence="3 6">
    <location>
        <position position="203"/>
    </location>
</feature>
<feature type="disulfide bond" evidence="4">
    <location>
        <begin position="101"/>
        <end position="121"/>
    </location>
</feature>
<feature type="disulfide bond" description="Interchain" evidence="4">
    <location>
        <position position="178"/>
    </location>
</feature>
<feature type="mutagenesis site" description="No cleavage by OPG083 protease in N-terminus." evidence="7">
    <original>G</original>
    <variation>A</variation>
    <location>
        <position position="16"/>
    </location>
</feature>
<feature type="mutagenesis site" description="No cleavage by OPG083 protease in N-terminus." evidence="7">
    <original>G</original>
    <variation>A</variation>
    <location>
        <position position="18"/>
    </location>
</feature>
<feature type="mutagenesis site" description="No cleavage by OPG083 protease in C-terminus." evidence="7">
    <original>G</original>
    <variation>A</variation>
    <location>
        <position position="185"/>
    </location>
</feature>
<feature type="mutagenesis site" description="Loss of phosphorylation." evidence="6">
    <original>Y</original>
    <variation>F</variation>
    <location>
        <position position="203"/>
    </location>
</feature>
<comment type="function">
    <text evidence="8 11">Envelope protein which participates in virus morphogenesis. Needed for an early step in viral crescent membrane formation by interacting with OPG125 scaffold protein. Its interaction with OPG125 scaffold protein leads to the formation of rigid, crescent-shaped membranes that assemble around the cytoplasmic virus factory. Acts as a membrane anchor for the protein OPG154 (PubMed:24451374). OPG144-OPG154 virus envelope protein might be involved in fusion or attachment, and can further associate with OPG153.</text>
</comment>
<comment type="subunit">
    <text evidence="2 4 9 10 11 12">Homodimer; disulfide-linked (PubMed:10666276). Interacts (via N-terminus) with OPG125 scaffold; this interaction helps OPG125 to associate with membranes. Interacts with OPG140. Interacts with OPG154; this interaction allows OPG154 to be anchored in the mature virion (MV) membrane (PubMed:24451374). Part of a complex composed of OPG144, OPG153 and OPG154.</text>
</comment>
<comment type="subcellular location">
    <subcellularLocation>
        <location evidence="13">Virion membrane</location>
        <topology evidence="13">Multi-pass membrane protein</topology>
    </subcellularLocation>
    <text evidence="5">The 23 kDa precursor is associated with immature virions (IV) and the final 21 kDa form is present in mature virions (MV).</text>
</comment>
<comment type="PTM">
    <text evidence="2">The 23 kDa precursor is cleaved into a final 21 kDa form by the OPG083 protease during virus maturation.</text>
</comment>
<comment type="PTM">
    <text evidence="2 3 6 13">Phosphorylated on tyrosine and threonine. Its phosphorylation state is regulated by the OPG054 kinase and the OPG106 phosphatase (Probable). Phosphorylation by OPG054 kinase seems to be required to form the membranes associated with IV.</text>
</comment>
<comment type="PTM">
    <text>Not glycosylated.</text>
</comment>
<comment type="similarity">
    <text evidence="13">Belongs to the orthopoxvirus OPG144 family.</text>
</comment>
<keyword id="KW-0067">ATP-binding</keyword>
<keyword id="KW-1015">Disulfide bond</keyword>
<keyword id="KW-0238">DNA-binding</keyword>
<keyword id="KW-0347">Helicase</keyword>
<keyword id="KW-0378">Hydrolase</keyword>
<keyword id="KW-0426">Late protein</keyword>
<keyword id="KW-0472">Membrane</keyword>
<keyword id="KW-0547">Nucleotide-binding</keyword>
<keyword id="KW-0597">Phosphoprotein</keyword>
<keyword id="KW-1185">Reference proteome</keyword>
<keyword id="KW-0804">Transcription</keyword>
<keyword id="KW-0805">Transcription regulation</keyword>
<keyword id="KW-0806">Transcription termination</keyword>
<keyword id="KW-0812">Transmembrane</keyword>
<keyword id="KW-1133">Transmembrane helix</keyword>
<keyword id="KW-0261">Viral envelope protein</keyword>
<keyword id="KW-0946">Virion</keyword>
<organism>
    <name type="scientific">Vaccinia virus (strain Western Reserve)</name>
    <name type="common">VACV</name>
    <name type="synonym">Vaccinia virus (strain WR)</name>
    <dbReference type="NCBI Taxonomy" id="10254"/>
    <lineage>
        <taxon>Viruses</taxon>
        <taxon>Varidnaviria</taxon>
        <taxon>Bamfordvirae</taxon>
        <taxon>Nucleocytoviricota</taxon>
        <taxon>Pokkesviricetes</taxon>
        <taxon>Chitovirales</taxon>
        <taxon>Poxviridae</taxon>
        <taxon>Chordopoxvirinae</taxon>
        <taxon>Orthopoxvirus</taxon>
        <taxon>Vaccinia virus</taxon>
    </lineage>
</organism>
<gene>
    <name type="primary">OPG144</name>
    <name type="ordered locus">VACWR137</name>
    <name type="ORF">A17L</name>
</gene>
<dbReference type="EMBL" id="M32064">
    <property type="protein sequence ID" value="AAA48349.1"/>
    <property type="molecule type" value="Genomic_DNA"/>
</dbReference>
<dbReference type="EMBL" id="AY243312">
    <property type="protein sequence ID" value="AAO89416.1"/>
    <property type="molecule type" value="Genomic_DNA"/>
</dbReference>
<dbReference type="PIR" id="A42519">
    <property type="entry name" value="A42519"/>
</dbReference>
<dbReference type="RefSeq" id="YP_233019.1">
    <property type="nucleotide sequence ID" value="NC_006998.1"/>
</dbReference>
<dbReference type="iPTMnet" id="P68593"/>
<dbReference type="DNASU" id="3707667"/>
<dbReference type="GeneID" id="3707667"/>
<dbReference type="KEGG" id="vg:3707667"/>
<dbReference type="Proteomes" id="UP000000344">
    <property type="component" value="Genome"/>
</dbReference>
<dbReference type="GO" id="GO:0016020">
    <property type="term" value="C:membrane"/>
    <property type="evidence" value="ECO:0007669"/>
    <property type="project" value="UniProtKB-KW"/>
</dbReference>
<dbReference type="GO" id="GO:0019031">
    <property type="term" value="C:viral envelope"/>
    <property type="evidence" value="ECO:0007669"/>
    <property type="project" value="UniProtKB-KW"/>
</dbReference>
<dbReference type="GO" id="GO:0055036">
    <property type="term" value="C:virion membrane"/>
    <property type="evidence" value="ECO:0007669"/>
    <property type="project" value="UniProtKB-SubCell"/>
</dbReference>
<dbReference type="GO" id="GO:0005524">
    <property type="term" value="F:ATP binding"/>
    <property type="evidence" value="ECO:0007669"/>
    <property type="project" value="UniProtKB-KW"/>
</dbReference>
<dbReference type="GO" id="GO:0003677">
    <property type="term" value="F:DNA binding"/>
    <property type="evidence" value="ECO:0007669"/>
    <property type="project" value="UniProtKB-KW"/>
</dbReference>
<dbReference type="GO" id="GO:0004386">
    <property type="term" value="F:helicase activity"/>
    <property type="evidence" value="ECO:0007669"/>
    <property type="project" value="UniProtKB-KW"/>
</dbReference>
<dbReference type="GO" id="GO:0016787">
    <property type="term" value="F:hydrolase activity"/>
    <property type="evidence" value="ECO:0007669"/>
    <property type="project" value="UniProtKB-KW"/>
</dbReference>
<dbReference type="GO" id="GO:0006353">
    <property type="term" value="P:DNA-templated transcription termination"/>
    <property type="evidence" value="ECO:0007669"/>
    <property type="project" value="UniProtKB-KW"/>
</dbReference>
<dbReference type="InterPro" id="IPR007977">
    <property type="entry name" value="Poxvirus_OPG144"/>
</dbReference>
<dbReference type="Pfam" id="PF05313">
    <property type="entry name" value="Pox_P21"/>
    <property type="match status" value="1"/>
</dbReference>
<reference key="1">
    <citation type="journal article" date="1990" name="J. Virol.">
        <title>Structure and expression of the vaccinia virus gene which prevents virus-induced breakdown of RNA.</title>
        <authorList>
            <person name="Pacha R.F."/>
            <person name="Meis R.J."/>
            <person name="Condit R.C."/>
        </authorList>
    </citation>
    <scope>NUCLEOTIDE SEQUENCE [GENOMIC DNA]</scope>
</reference>
<reference key="2">
    <citation type="submission" date="2003-02" db="EMBL/GenBank/DDBJ databases">
        <title>Sequencing of the coding region of Vaccinia-WR to an average 9-fold redundancy and an error rate of 0.16/10kb.</title>
        <authorList>
            <person name="Esposito J.J."/>
            <person name="Frace A.M."/>
            <person name="Sammons S.A."/>
            <person name="Olsen-Rasmussen M."/>
            <person name="Osborne J."/>
            <person name="Wohlhueter R."/>
        </authorList>
    </citation>
    <scope>NUCLEOTIDE SEQUENCE [LARGE SCALE GENOMIC DNA]</scope>
</reference>
<reference key="3">
    <citation type="journal article" date="1998" name="J. Virol.">
        <title>The vaccinia virus 14-kilodalton (A27L) fusion protein forms a triple coiled-coil structure and interacts with the 21-kilodalton (A17L) virus membrane protein through a C-terminal alpha-helix.</title>
        <authorList>
            <person name="Vazquez M.I."/>
            <person name="Rivas G."/>
            <person name="Cregut D."/>
            <person name="Serrano L."/>
            <person name="Esteban M."/>
        </authorList>
    </citation>
    <scope>INTERACTION WITH OPG154</scope>
</reference>
<reference key="4">
    <citation type="journal article" date="1999" name="J. Virol.">
        <title>Regulation of vaccinia virus morphogenesis: phosphorylation of the A14L and A17L membrane proteins and C-terminal truncation of the A17L protein are dependent on the F10L kinase.</title>
        <authorList>
            <person name="Betakova T."/>
            <person name="Wolffe E.J."/>
            <person name="Moss B."/>
        </authorList>
    </citation>
    <scope>INTERACTION WITH OPG140</scope>
    <scope>PROTEOLYTIC CLEAVAGE AT GLY-185</scope>
    <scope>PHOSPHORYLATION BY OPG054 KINASE</scope>
</reference>
<reference key="5">
    <citation type="journal article" date="1999" name="J. Virol.">
        <title>Tyrosine phosphorylation of A17 during vaccinia virus infection: involvement of the H1 phosphatase and the F10 kinase.</title>
        <authorList>
            <person name="Derrien M."/>
            <person name="Punjabi A."/>
            <person name="Khanna M."/>
            <person name="Grubisha O."/>
            <person name="Traktman P."/>
        </authorList>
    </citation>
    <scope>PHOSPHORYLATION AT TYR-203</scope>
</reference>
<reference key="6">
    <citation type="journal article" date="1999" name="Virology">
        <title>Membrane topology of the vaccinia virus A17L envelope protein.</title>
        <authorList>
            <person name="Betakova T."/>
            <person name="Wolffe E.J."/>
            <person name="Moss B."/>
        </authorList>
    </citation>
    <scope>TOPOLOGY</scope>
    <scope>LACK OF GLYCOSYLATION</scope>
</reference>
<reference key="7">
    <citation type="journal article" date="2000" name="J. Virol.">
        <title>Disulfide bonds and membrane topology of the vaccinia virus A17L envelope protein.</title>
        <authorList>
            <person name="Betakova T."/>
            <person name="Moss B."/>
        </authorList>
    </citation>
    <scope>DISULFIDE BONDS</scope>
    <scope>SUBUNIT</scope>
</reference>
<reference key="8">
    <citation type="journal article" date="2001" name="Virology">
        <title>The A17L gene product of vaccinia virus is exposed on the surface of IMV.</title>
        <authorList>
            <person name="Wallengren K."/>
            <person name="Risco C."/>
            <person name="Krijnse-Locker J."/>
            <person name="Esteban M."/>
            <person name="Rodriguez D."/>
        </authorList>
    </citation>
    <scope>SUBCELLULAR LOCATION</scope>
    <scope>TOPOLOGY</scope>
</reference>
<reference key="9">
    <citation type="journal article" date="2004" name="J. Virol.">
        <title>Role of the I7 protein in proteolytic processing of vaccinia virus membrane and core components.</title>
        <authorList>
            <person name="Ansarah-Sobrinho C."/>
            <person name="Moss B."/>
        </authorList>
    </citation>
    <scope>POST-TRANSLATIONAL MODIFICATIONS</scope>
    <scope>MUTAGENESIS OF GLY-16; GLY-18 AND GLY-185</scope>
    <scope>PROTEOLYTIC CLEAVAGE AT GLY-16 AND GLY-185</scope>
</reference>
<reference key="10">
    <citation type="journal article" date="2004" name="J. Virol.">
        <title>Physical and functional interactions between vaccinia virus F10 protein kinase and virion assembly proteins A30 and G7.</title>
        <authorList>
            <person name="Szajner P."/>
            <person name="Weisberg A.S."/>
            <person name="Moss B."/>
        </authorList>
    </citation>
    <scope>PHOSPHORYLATION AT TYR-203</scope>
    <scope>MUTAGENESIS OF TYR-203</scope>
</reference>
<reference key="11">
    <citation type="journal article" date="2008" name="Cell. Microbiol.">
        <title>Membrane cell fusion activity of the vaccinia virus A17-A27 protein complex.</title>
        <authorList>
            <person name="Kochan G."/>
            <person name="Escors D."/>
            <person name="Gonzalez J.M."/>
            <person name="Casasnovas J.M."/>
            <person name="Esteban M."/>
        </authorList>
    </citation>
    <scope>FUNCTION</scope>
</reference>
<reference key="12">
    <citation type="journal article" date="2008" name="J. Virol.">
        <title>Vaccinia virus A26 and A27 proteins form a stable complex tethered to mature virions by association with the A17 transmembrane protein.</title>
        <authorList>
            <person name="Howard A.R."/>
            <person name="Senkevich T.G."/>
            <person name="Moss B."/>
        </authorList>
    </citation>
    <scope>IDENTIFICATION IN A COMPLEX WITH OPG153 AND OPG154</scope>
</reference>
<reference key="13">
    <citation type="journal article" date="2009" name="J. Virol.">
        <title>Assembly and disassembly of the capsid-like external scaffold of immature virions during vaccinia virus morphogenesis.</title>
        <authorList>
            <person name="Bisht H."/>
            <person name="Weisberg A.S."/>
            <person name="Szajner P."/>
            <person name="Moss B."/>
        </authorList>
    </citation>
    <scope>INTERACTION WITH D13</scope>
</reference>
<reference key="14">
    <citation type="journal article" date="2014" name="J. Biol. Chem.">
        <title>Vaccinia viral protein A27 is anchored to the viral membrane via a cooperative interaction with viral membrane protein A17.</title>
        <authorList>
            <person name="Wang D.R."/>
            <person name="Hsiao J.C."/>
            <person name="Wong C.H."/>
            <person name="Li G.C."/>
            <person name="Lin S.C."/>
            <person name="Yu S.S."/>
            <person name="Chen W."/>
            <person name="Chang W."/>
            <person name="Tzou D.M."/>
        </authorList>
    </citation>
    <scope>FUNCTION</scope>
    <scope>INTERACTION WITH OPG154</scope>
</reference>
<evidence type="ECO:0000255" key="1"/>
<evidence type="ECO:0000269" key="2">
    <source>
    </source>
</evidence>
<evidence type="ECO:0000269" key="3">
    <source>
    </source>
</evidence>
<evidence type="ECO:0000269" key="4">
    <source>
    </source>
</evidence>
<evidence type="ECO:0000269" key="5">
    <source>
    </source>
</evidence>
<evidence type="ECO:0000269" key="6">
    <source>
    </source>
</evidence>
<evidence type="ECO:0000269" key="7">
    <source>
    </source>
</evidence>
<evidence type="ECO:0000269" key="8">
    <source>
    </source>
</evidence>
<evidence type="ECO:0000269" key="9">
    <source>
    </source>
</evidence>
<evidence type="ECO:0000269" key="10">
    <source>
    </source>
</evidence>
<evidence type="ECO:0000269" key="11">
    <source>
    </source>
</evidence>
<evidence type="ECO:0000269" key="12">
    <source>
    </source>
</evidence>
<evidence type="ECO:0000305" key="13"/>
<evidence type="ECO:0000305" key="14">
    <source>
    </source>
</evidence>
<accession>P68593</accession>
<accession>P16711</accession>
<accession>Q76ZQ1</accession>
<proteinExistence type="evidence at protein level"/>